<feature type="chain" id="PRO_0000272092" description="Lipoprotein-releasing system ATP-binding protein LolD">
    <location>
        <begin position="1"/>
        <end position="229"/>
    </location>
</feature>
<feature type="domain" description="ABC transporter" evidence="1">
    <location>
        <begin position="9"/>
        <end position="229"/>
    </location>
</feature>
<feature type="binding site" evidence="1">
    <location>
        <begin position="45"/>
        <end position="52"/>
    </location>
    <ligand>
        <name>ATP</name>
        <dbReference type="ChEBI" id="CHEBI:30616"/>
    </ligand>
</feature>
<sequence length="229" mass="24715">MSDYPSCALRLEQVARRYRSGDQELVVLDHADLELRPGEIVALVAPSGTGKSTLLHLAGLLEKPDEGRVWIGSHDAGGLSDTARTALRRDHLGFVYQFHHLLGEFSALENVVLPQMIAGRTRRQAEQHALTLLSAFGLQHRASHLPGMLSGGEQQRVAIARALANGPAVLLADEPTGNLDIHTAETVFSALLSAVRNQNVAALIATHNPDLAGRMDRQVTIREGQIVPA</sequence>
<comment type="function">
    <text evidence="1">Part of the ABC transporter complex LolCDE involved in the translocation of mature outer membrane-directed lipoproteins, from the inner membrane to the periplasmic chaperone, LolA. Responsible for the formation of the LolA-lipoprotein complex in an ATP-dependent manner.</text>
</comment>
<comment type="subunit">
    <text evidence="1">The complex is composed of two ATP-binding proteins (LolD) and two transmembrane proteins (LolC and LolE).</text>
</comment>
<comment type="subcellular location">
    <subcellularLocation>
        <location evidence="1">Cell inner membrane</location>
        <topology evidence="1">Peripheral membrane protein</topology>
    </subcellularLocation>
</comment>
<comment type="similarity">
    <text evidence="1">Belongs to the ABC transporter superfamily. Lipoprotein translocase (TC 3.A.1.125) family.</text>
</comment>
<gene>
    <name evidence="1" type="primary">lolD</name>
    <name type="ordered locus">GbCGDNIH1_1282</name>
</gene>
<organism>
    <name type="scientific">Granulibacter bethesdensis (strain ATCC BAA-1260 / CGDNIH1)</name>
    <dbReference type="NCBI Taxonomy" id="391165"/>
    <lineage>
        <taxon>Bacteria</taxon>
        <taxon>Pseudomonadati</taxon>
        <taxon>Pseudomonadota</taxon>
        <taxon>Alphaproteobacteria</taxon>
        <taxon>Acetobacterales</taxon>
        <taxon>Acetobacteraceae</taxon>
        <taxon>Granulibacter</taxon>
    </lineage>
</organism>
<accession>Q0BSM2</accession>
<proteinExistence type="inferred from homology"/>
<keyword id="KW-0067">ATP-binding</keyword>
<keyword id="KW-0997">Cell inner membrane</keyword>
<keyword id="KW-1003">Cell membrane</keyword>
<keyword id="KW-0472">Membrane</keyword>
<keyword id="KW-0547">Nucleotide-binding</keyword>
<keyword id="KW-1185">Reference proteome</keyword>
<keyword id="KW-1278">Translocase</keyword>
<keyword id="KW-0813">Transport</keyword>
<name>LOLD_GRABC</name>
<dbReference type="EC" id="7.6.2.-" evidence="1"/>
<dbReference type="EMBL" id="CP000394">
    <property type="protein sequence ID" value="ABI62180.1"/>
    <property type="molecule type" value="Genomic_DNA"/>
</dbReference>
<dbReference type="RefSeq" id="WP_011631989.1">
    <property type="nucleotide sequence ID" value="NC_008343.2"/>
</dbReference>
<dbReference type="SMR" id="Q0BSM2"/>
<dbReference type="STRING" id="391165.GbCGDNIH1_1282"/>
<dbReference type="KEGG" id="gbe:GbCGDNIH1_1282"/>
<dbReference type="eggNOG" id="COG1136">
    <property type="taxonomic scope" value="Bacteria"/>
</dbReference>
<dbReference type="HOGENOM" id="CLU_000604_1_22_5"/>
<dbReference type="OrthoDB" id="9786950at2"/>
<dbReference type="Proteomes" id="UP000001963">
    <property type="component" value="Chromosome"/>
</dbReference>
<dbReference type="GO" id="GO:0005886">
    <property type="term" value="C:plasma membrane"/>
    <property type="evidence" value="ECO:0007669"/>
    <property type="project" value="UniProtKB-SubCell"/>
</dbReference>
<dbReference type="GO" id="GO:0005524">
    <property type="term" value="F:ATP binding"/>
    <property type="evidence" value="ECO:0007669"/>
    <property type="project" value="UniProtKB-KW"/>
</dbReference>
<dbReference type="GO" id="GO:0016887">
    <property type="term" value="F:ATP hydrolysis activity"/>
    <property type="evidence" value="ECO:0007669"/>
    <property type="project" value="InterPro"/>
</dbReference>
<dbReference type="GO" id="GO:0022857">
    <property type="term" value="F:transmembrane transporter activity"/>
    <property type="evidence" value="ECO:0007669"/>
    <property type="project" value="TreeGrafter"/>
</dbReference>
<dbReference type="GO" id="GO:0044874">
    <property type="term" value="P:lipoprotein localization to outer membrane"/>
    <property type="evidence" value="ECO:0007669"/>
    <property type="project" value="TreeGrafter"/>
</dbReference>
<dbReference type="GO" id="GO:0089705">
    <property type="term" value="P:protein localization to outer membrane"/>
    <property type="evidence" value="ECO:0007669"/>
    <property type="project" value="TreeGrafter"/>
</dbReference>
<dbReference type="CDD" id="cd03255">
    <property type="entry name" value="ABC_MJ0796_LolCDE_FtsE"/>
    <property type="match status" value="1"/>
</dbReference>
<dbReference type="FunFam" id="3.40.50.300:FF:000032">
    <property type="entry name" value="Export ABC transporter ATP-binding protein"/>
    <property type="match status" value="1"/>
</dbReference>
<dbReference type="Gene3D" id="3.40.50.300">
    <property type="entry name" value="P-loop containing nucleotide triphosphate hydrolases"/>
    <property type="match status" value="1"/>
</dbReference>
<dbReference type="InterPro" id="IPR003593">
    <property type="entry name" value="AAA+_ATPase"/>
</dbReference>
<dbReference type="InterPro" id="IPR003439">
    <property type="entry name" value="ABC_transporter-like_ATP-bd"/>
</dbReference>
<dbReference type="InterPro" id="IPR017871">
    <property type="entry name" value="ABC_transporter-like_CS"/>
</dbReference>
<dbReference type="InterPro" id="IPR015854">
    <property type="entry name" value="ABC_transpr_LolD-like"/>
</dbReference>
<dbReference type="InterPro" id="IPR017911">
    <property type="entry name" value="MacB-like_ATP-bd"/>
</dbReference>
<dbReference type="InterPro" id="IPR027417">
    <property type="entry name" value="P-loop_NTPase"/>
</dbReference>
<dbReference type="PANTHER" id="PTHR24220">
    <property type="entry name" value="IMPORT ATP-BINDING PROTEIN"/>
    <property type="match status" value="1"/>
</dbReference>
<dbReference type="PANTHER" id="PTHR24220:SF689">
    <property type="entry name" value="LIPOPROTEIN-RELEASING SYSTEM ATP-BINDING PROTEIN LOLD"/>
    <property type="match status" value="1"/>
</dbReference>
<dbReference type="Pfam" id="PF00005">
    <property type="entry name" value="ABC_tran"/>
    <property type="match status" value="1"/>
</dbReference>
<dbReference type="SMART" id="SM00382">
    <property type="entry name" value="AAA"/>
    <property type="match status" value="1"/>
</dbReference>
<dbReference type="SUPFAM" id="SSF52540">
    <property type="entry name" value="P-loop containing nucleoside triphosphate hydrolases"/>
    <property type="match status" value="1"/>
</dbReference>
<dbReference type="PROSITE" id="PS00211">
    <property type="entry name" value="ABC_TRANSPORTER_1"/>
    <property type="match status" value="1"/>
</dbReference>
<dbReference type="PROSITE" id="PS50893">
    <property type="entry name" value="ABC_TRANSPORTER_2"/>
    <property type="match status" value="1"/>
</dbReference>
<dbReference type="PROSITE" id="PS51244">
    <property type="entry name" value="LOLD"/>
    <property type="match status" value="1"/>
</dbReference>
<reference key="1">
    <citation type="journal article" date="2007" name="J. Bacteriol.">
        <title>Genome sequence analysis of the emerging human pathogenic acetic acid bacterium Granulibacter bethesdensis.</title>
        <authorList>
            <person name="Greenberg D.E."/>
            <person name="Porcella S.F."/>
            <person name="Zelazny A.M."/>
            <person name="Virtaneva K."/>
            <person name="Sturdevant D.E."/>
            <person name="Kupko J.J. III"/>
            <person name="Barbian K.D."/>
            <person name="Babar A."/>
            <person name="Dorward D.W."/>
            <person name="Holland S.M."/>
        </authorList>
    </citation>
    <scope>NUCLEOTIDE SEQUENCE [LARGE SCALE GENOMIC DNA]</scope>
    <source>
        <strain>ATCC BAA-1260 / CGDNIH1</strain>
    </source>
</reference>
<protein>
    <recommendedName>
        <fullName evidence="1">Lipoprotein-releasing system ATP-binding protein LolD</fullName>
        <ecNumber evidence="1">7.6.2.-</ecNumber>
    </recommendedName>
</protein>
<evidence type="ECO:0000255" key="1">
    <source>
        <dbReference type="HAMAP-Rule" id="MF_01708"/>
    </source>
</evidence>